<proteinExistence type="evidence at transcript level"/>
<dbReference type="EMBL" id="AF162800">
    <property type="protein sequence ID" value="AAD47277.1"/>
    <property type="molecule type" value="Genomic_DNA"/>
</dbReference>
<dbReference type="EMBL" id="AK132534">
    <property type="protein sequence ID" value="BAE21225.1"/>
    <property type="molecule type" value="mRNA"/>
</dbReference>
<dbReference type="EMBL" id="BC116219">
    <property type="protein sequence ID" value="AAI16220.1"/>
    <property type="molecule type" value="mRNA"/>
</dbReference>
<dbReference type="CCDS" id="CCDS79477.1"/>
<dbReference type="RefSeq" id="NP_038741.1">
    <property type="nucleotide sequence ID" value="NM_013713.2"/>
</dbReference>
<dbReference type="FunCoup" id="Q9QZU5">
    <property type="interactions" value="44"/>
</dbReference>
<dbReference type="STRING" id="10090.ENSMUSP00000140888"/>
<dbReference type="iPTMnet" id="Q9QZU5"/>
<dbReference type="PhosphoSitePlus" id="Q9QZU5"/>
<dbReference type="PaxDb" id="10090-ENSMUSP00000140888"/>
<dbReference type="ProteomicsDB" id="263563"/>
<dbReference type="Antibodypedia" id="6633">
    <property type="antibodies" value="2 antibodies from 2 providers"/>
</dbReference>
<dbReference type="DNASU" id="26560"/>
<dbReference type="Ensembl" id="ENSMUST00000187823.2">
    <property type="protein sequence ID" value="ENSMUSP00000140888.2"/>
    <property type="gene ID" value="ENSMUSG00000022931.8"/>
</dbReference>
<dbReference type="GeneID" id="26560"/>
<dbReference type="KEGG" id="mmu:26560"/>
<dbReference type="UCSC" id="uc007zvg.1">
    <property type="organism name" value="mouse"/>
</dbReference>
<dbReference type="AGR" id="MGI:1347350"/>
<dbReference type="CTD" id="254950"/>
<dbReference type="MGI" id="MGI:1347350">
    <property type="gene designation" value="Krtap15-1"/>
</dbReference>
<dbReference type="VEuPathDB" id="HostDB:ENSMUSG00000022931"/>
<dbReference type="eggNOG" id="ENOG502TD2Y">
    <property type="taxonomic scope" value="Eukaryota"/>
</dbReference>
<dbReference type="GeneTree" id="ENSGT00940000162109"/>
<dbReference type="HOGENOM" id="CLU_111618_0_0_1"/>
<dbReference type="InParanoid" id="Q9QZU5"/>
<dbReference type="OMA" id="TCDSFYP"/>
<dbReference type="OrthoDB" id="9834780at2759"/>
<dbReference type="PhylomeDB" id="Q9QZU5"/>
<dbReference type="BioGRID-ORCS" id="26560">
    <property type="hits" value="1 hit in 65 CRISPR screens"/>
</dbReference>
<dbReference type="PRO" id="PR:Q9QZU5"/>
<dbReference type="Proteomes" id="UP000000589">
    <property type="component" value="Chromosome 16"/>
</dbReference>
<dbReference type="RNAct" id="Q9QZU5">
    <property type="molecule type" value="protein"/>
</dbReference>
<dbReference type="Bgee" id="ENSMUSG00000022931">
    <property type="expression patterns" value="Expressed in lip and 6 other cell types or tissues"/>
</dbReference>
<dbReference type="ExpressionAtlas" id="Q9QZU5">
    <property type="expression patterns" value="baseline and differential"/>
</dbReference>
<dbReference type="GO" id="GO:0005829">
    <property type="term" value="C:cytosol"/>
    <property type="evidence" value="ECO:0007669"/>
    <property type="project" value="UniProtKB-ARBA"/>
</dbReference>
<dbReference type="GO" id="GO:0005882">
    <property type="term" value="C:intermediate filament"/>
    <property type="evidence" value="ECO:0007669"/>
    <property type="project" value="UniProtKB-KW"/>
</dbReference>
<dbReference type="InterPro" id="IPR007951">
    <property type="entry name" value="KRTAP_PMG"/>
</dbReference>
<dbReference type="Pfam" id="PF05287">
    <property type="entry name" value="PMG"/>
    <property type="match status" value="1"/>
</dbReference>
<sequence>MSYTCNSGNYSSQSFGGFLRQPVSTYNSFYPTSNVVYSPKNFQLGSSFYNGQQETFSEPLEGHLPCVGSASFHTSCFRPKQYFSSPCQGGFTGSFGYGNTGFGAFGFGSSGIRSQGCGSNFYRPGYFSSKSIQSSYYQPGYSSGFCGSNF</sequence>
<evidence type="ECO:0000250" key="1">
    <source>
        <dbReference type="UniProtKB" id="Q3LI76"/>
    </source>
</evidence>
<evidence type="ECO:0000255" key="2"/>
<evidence type="ECO:0000269" key="3">
    <source>
    </source>
</evidence>
<evidence type="ECO:0000305" key="4"/>
<evidence type="ECO:0000312" key="5">
    <source>
        <dbReference type="EMBL" id="AAD47277.1"/>
    </source>
</evidence>
<evidence type="ECO:0000312" key="6">
    <source>
        <dbReference type="EMBL" id="AAI16220.1"/>
    </source>
</evidence>
<evidence type="ECO:0000312" key="7">
    <source>
        <dbReference type="EMBL" id="BAE21225.1"/>
    </source>
</evidence>
<evidence type="ECO:0000312" key="8">
    <source>
        <dbReference type="MGI" id="MGI:1347350"/>
    </source>
</evidence>
<name>KR151_MOUSE</name>
<comment type="function">
    <text evidence="4">In the hair cortex, hair keratin intermediate filaments are embedded in an interfilamentous matrix, consisting of hair keratin-associated proteins (KRTAP), which are essential for the formation of a rigid and resistant hair shaft through their extensive disulfide bond cross-linking with abundant cysteine residues of hair keratins. The matrix proteins include the high-sulfur and high-glycine-tyrosine keratins.</text>
</comment>
<comment type="subunit">
    <text evidence="4">Interacts with hair keratins.</text>
</comment>
<comment type="tissue specificity">
    <text evidence="3">Expressed at high levels in skin and at lower levels in the developing mammary gland.</text>
</comment>
<comment type="developmental stage">
    <text evidence="3">In skin, expression starts shortly after birth and reaches a first maximum at 9 days. A second peak of expression is observed at 3.5 weeks, then levels decline and remain low in the adult. In the developing mammary gland, expression is detected exclusively at the onset of puberty.</text>
</comment>
<comment type="similarity">
    <text evidence="2">Belongs to the PMG family.</text>
</comment>
<feature type="chain" id="PRO_0000271177" description="Keratin-associated protein 15-1">
    <location>
        <begin position="1"/>
        <end position="150"/>
    </location>
</feature>
<accession>Q9QZU5</accession>
<keyword id="KW-0416">Keratin</keyword>
<keyword id="KW-1185">Reference proteome</keyword>
<protein>
    <recommendedName>
        <fullName>Keratin-associated protein 15-1</fullName>
    </recommendedName>
    <alternativeName>
        <fullName>Keratin-associated protein 15</fullName>
    </alternativeName>
    <alternativeName>
        <fullName>Pubertal mammary gland-specific protein 2</fullName>
    </alternativeName>
</protein>
<gene>
    <name evidence="1" type="primary">Krtap15-1</name>
    <name evidence="8" type="synonym">Krtap15</name>
    <name evidence="5" type="synonym">Pmg2</name>
</gene>
<organism>
    <name type="scientific">Mus musculus</name>
    <name type="common">Mouse</name>
    <dbReference type="NCBI Taxonomy" id="10090"/>
    <lineage>
        <taxon>Eukaryota</taxon>
        <taxon>Metazoa</taxon>
        <taxon>Chordata</taxon>
        <taxon>Craniata</taxon>
        <taxon>Vertebrata</taxon>
        <taxon>Euteleostomi</taxon>
        <taxon>Mammalia</taxon>
        <taxon>Eutheria</taxon>
        <taxon>Euarchontoglires</taxon>
        <taxon>Glires</taxon>
        <taxon>Rodentia</taxon>
        <taxon>Myomorpha</taxon>
        <taxon>Muroidea</taxon>
        <taxon>Muridae</taxon>
        <taxon>Murinae</taxon>
        <taxon>Mus</taxon>
        <taxon>Mus</taxon>
    </lineage>
</organism>
<reference evidence="4 5" key="1">
    <citation type="journal article" date="1999" name="Mech. Dev.">
        <title>Pmg-1 and pmg-2 constitute a novel family of KAP genes differentially expressed during skin and mammary gland development.</title>
        <authorList>
            <person name="Kuhn F."/>
            <person name="Lassing C."/>
            <person name="Range A."/>
            <person name="Mueller M."/>
            <person name="Hunziker T."/>
            <person name="Ziemiecki A."/>
            <person name="Andres A.-C."/>
        </authorList>
    </citation>
    <scope>NUCLEOTIDE SEQUENCE [GENOMIC DNA]</scope>
    <scope>TISSUE SPECIFICITY</scope>
    <scope>DEVELOPMENTAL STAGE</scope>
</reference>
<reference evidence="7" key="2">
    <citation type="journal article" date="2005" name="Science">
        <title>The transcriptional landscape of the mammalian genome.</title>
        <authorList>
            <person name="Carninci P."/>
            <person name="Kasukawa T."/>
            <person name="Katayama S."/>
            <person name="Gough J."/>
            <person name="Frith M.C."/>
            <person name="Maeda N."/>
            <person name="Oyama R."/>
            <person name="Ravasi T."/>
            <person name="Lenhard B."/>
            <person name="Wells C."/>
            <person name="Kodzius R."/>
            <person name="Shimokawa K."/>
            <person name="Bajic V.B."/>
            <person name="Brenner S.E."/>
            <person name="Batalov S."/>
            <person name="Forrest A.R."/>
            <person name="Zavolan M."/>
            <person name="Davis M.J."/>
            <person name="Wilming L.G."/>
            <person name="Aidinis V."/>
            <person name="Allen J.E."/>
            <person name="Ambesi-Impiombato A."/>
            <person name="Apweiler R."/>
            <person name="Aturaliya R.N."/>
            <person name="Bailey T.L."/>
            <person name="Bansal M."/>
            <person name="Baxter L."/>
            <person name="Beisel K.W."/>
            <person name="Bersano T."/>
            <person name="Bono H."/>
            <person name="Chalk A.M."/>
            <person name="Chiu K.P."/>
            <person name="Choudhary V."/>
            <person name="Christoffels A."/>
            <person name="Clutterbuck D.R."/>
            <person name="Crowe M.L."/>
            <person name="Dalla E."/>
            <person name="Dalrymple B.P."/>
            <person name="de Bono B."/>
            <person name="Della Gatta G."/>
            <person name="di Bernardo D."/>
            <person name="Down T."/>
            <person name="Engstrom P."/>
            <person name="Fagiolini M."/>
            <person name="Faulkner G."/>
            <person name="Fletcher C.F."/>
            <person name="Fukushima T."/>
            <person name="Furuno M."/>
            <person name="Futaki S."/>
            <person name="Gariboldi M."/>
            <person name="Georgii-Hemming P."/>
            <person name="Gingeras T.R."/>
            <person name="Gojobori T."/>
            <person name="Green R.E."/>
            <person name="Gustincich S."/>
            <person name="Harbers M."/>
            <person name="Hayashi Y."/>
            <person name="Hensch T.K."/>
            <person name="Hirokawa N."/>
            <person name="Hill D."/>
            <person name="Huminiecki L."/>
            <person name="Iacono M."/>
            <person name="Ikeo K."/>
            <person name="Iwama A."/>
            <person name="Ishikawa T."/>
            <person name="Jakt M."/>
            <person name="Kanapin A."/>
            <person name="Katoh M."/>
            <person name="Kawasawa Y."/>
            <person name="Kelso J."/>
            <person name="Kitamura H."/>
            <person name="Kitano H."/>
            <person name="Kollias G."/>
            <person name="Krishnan S.P."/>
            <person name="Kruger A."/>
            <person name="Kummerfeld S.K."/>
            <person name="Kurochkin I.V."/>
            <person name="Lareau L.F."/>
            <person name="Lazarevic D."/>
            <person name="Lipovich L."/>
            <person name="Liu J."/>
            <person name="Liuni S."/>
            <person name="McWilliam S."/>
            <person name="Madan Babu M."/>
            <person name="Madera M."/>
            <person name="Marchionni L."/>
            <person name="Matsuda H."/>
            <person name="Matsuzawa S."/>
            <person name="Miki H."/>
            <person name="Mignone F."/>
            <person name="Miyake S."/>
            <person name="Morris K."/>
            <person name="Mottagui-Tabar S."/>
            <person name="Mulder N."/>
            <person name="Nakano N."/>
            <person name="Nakauchi H."/>
            <person name="Ng P."/>
            <person name="Nilsson R."/>
            <person name="Nishiguchi S."/>
            <person name="Nishikawa S."/>
            <person name="Nori F."/>
            <person name="Ohara O."/>
            <person name="Okazaki Y."/>
            <person name="Orlando V."/>
            <person name="Pang K.C."/>
            <person name="Pavan W.J."/>
            <person name="Pavesi G."/>
            <person name="Pesole G."/>
            <person name="Petrovsky N."/>
            <person name="Piazza S."/>
            <person name="Reed J."/>
            <person name="Reid J.F."/>
            <person name="Ring B.Z."/>
            <person name="Ringwald M."/>
            <person name="Rost B."/>
            <person name="Ruan Y."/>
            <person name="Salzberg S.L."/>
            <person name="Sandelin A."/>
            <person name="Schneider C."/>
            <person name="Schoenbach C."/>
            <person name="Sekiguchi K."/>
            <person name="Semple C.A."/>
            <person name="Seno S."/>
            <person name="Sessa L."/>
            <person name="Sheng Y."/>
            <person name="Shibata Y."/>
            <person name="Shimada H."/>
            <person name="Shimada K."/>
            <person name="Silva D."/>
            <person name="Sinclair B."/>
            <person name="Sperling S."/>
            <person name="Stupka E."/>
            <person name="Sugiura K."/>
            <person name="Sultana R."/>
            <person name="Takenaka Y."/>
            <person name="Taki K."/>
            <person name="Tammoja K."/>
            <person name="Tan S.L."/>
            <person name="Tang S."/>
            <person name="Taylor M.S."/>
            <person name="Tegner J."/>
            <person name="Teichmann S.A."/>
            <person name="Ueda H.R."/>
            <person name="van Nimwegen E."/>
            <person name="Verardo R."/>
            <person name="Wei C.L."/>
            <person name="Yagi K."/>
            <person name="Yamanishi H."/>
            <person name="Zabarovsky E."/>
            <person name="Zhu S."/>
            <person name="Zimmer A."/>
            <person name="Hide W."/>
            <person name="Bult C."/>
            <person name="Grimmond S.M."/>
            <person name="Teasdale R.D."/>
            <person name="Liu E.T."/>
            <person name="Brusic V."/>
            <person name="Quackenbush J."/>
            <person name="Wahlestedt C."/>
            <person name="Mattick J.S."/>
            <person name="Hume D.A."/>
            <person name="Kai C."/>
            <person name="Sasaki D."/>
            <person name="Tomaru Y."/>
            <person name="Fukuda S."/>
            <person name="Kanamori-Katayama M."/>
            <person name="Suzuki M."/>
            <person name="Aoki J."/>
            <person name="Arakawa T."/>
            <person name="Iida J."/>
            <person name="Imamura K."/>
            <person name="Itoh M."/>
            <person name="Kato T."/>
            <person name="Kawaji H."/>
            <person name="Kawagashira N."/>
            <person name="Kawashima T."/>
            <person name="Kojima M."/>
            <person name="Kondo S."/>
            <person name="Konno H."/>
            <person name="Nakano K."/>
            <person name="Ninomiya N."/>
            <person name="Nishio T."/>
            <person name="Okada M."/>
            <person name="Plessy C."/>
            <person name="Shibata K."/>
            <person name="Shiraki T."/>
            <person name="Suzuki S."/>
            <person name="Tagami M."/>
            <person name="Waki K."/>
            <person name="Watahiki A."/>
            <person name="Okamura-Oho Y."/>
            <person name="Suzuki H."/>
            <person name="Kawai J."/>
            <person name="Hayashizaki Y."/>
        </authorList>
    </citation>
    <scope>NUCLEOTIDE SEQUENCE [LARGE SCALE MRNA]</scope>
    <source>
        <strain evidence="7">C57BL/6J</strain>
        <tissue evidence="7">Skin</tissue>
    </source>
</reference>
<reference evidence="6" key="3">
    <citation type="journal article" date="2004" name="Genome Res.">
        <title>The status, quality, and expansion of the NIH full-length cDNA project: the Mammalian Gene Collection (MGC).</title>
        <authorList>
            <consortium name="The MGC Project Team"/>
        </authorList>
    </citation>
    <scope>NUCLEOTIDE SEQUENCE [LARGE SCALE MRNA]</scope>
</reference>